<reference key="1">
    <citation type="journal article" date="1999" name="Nat. Genet.">
        <title>Comparative genomes of Chlamydia pneumoniae and C. trachomatis.</title>
        <authorList>
            <person name="Kalman S."/>
            <person name="Mitchell W.P."/>
            <person name="Marathe R."/>
            <person name="Lammel C.J."/>
            <person name="Fan J."/>
            <person name="Hyman R.W."/>
            <person name="Olinger L."/>
            <person name="Grimwood J."/>
            <person name="Davis R.W."/>
            <person name="Stephens R.S."/>
        </authorList>
    </citation>
    <scope>NUCLEOTIDE SEQUENCE [LARGE SCALE GENOMIC DNA]</scope>
    <source>
        <strain>CWL029</strain>
    </source>
</reference>
<reference key="2">
    <citation type="journal article" date="2000" name="Nucleic Acids Res.">
        <title>Genome sequences of Chlamydia trachomatis MoPn and Chlamydia pneumoniae AR39.</title>
        <authorList>
            <person name="Read T.D."/>
            <person name="Brunham R.C."/>
            <person name="Shen C."/>
            <person name="Gill S.R."/>
            <person name="Heidelberg J.F."/>
            <person name="White O."/>
            <person name="Hickey E.K."/>
            <person name="Peterson J.D."/>
            <person name="Utterback T.R."/>
            <person name="Berry K.J."/>
            <person name="Bass S."/>
            <person name="Linher K.D."/>
            <person name="Weidman J.F."/>
            <person name="Khouri H.M."/>
            <person name="Craven B."/>
            <person name="Bowman C."/>
            <person name="Dodson R.J."/>
            <person name="Gwinn M.L."/>
            <person name="Nelson W.C."/>
            <person name="DeBoy R.T."/>
            <person name="Kolonay J.F."/>
            <person name="McClarty G."/>
            <person name="Salzberg S.L."/>
            <person name="Eisen J.A."/>
            <person name="Fraser C.M."/>
        </authorList>
    </citation>
    <scope>NUCLEOTIDE SEQUENCE [LARGE SCALE GENOMIC DNA]</scope>
    <source>
        <strain>AR39</strain>
    </source>
</reference>
<reference key="3">
    <citation type="journal article" date="2000" name="Nucleic Acids Res.">
        <title>Comparison of whole genome sequences of Chlamydia pneumoniae J138 from Japan and CWL029 from USA.</title>
        <authorList>
            <person name="Shirai M."/>
            <person name="Hirakawa H."/>
            <person name="Kimoto M."/>
            <person name="Tabuchi M."/>
            <person name="Kishi F."/>
            <person name="Ouchi K."/>
            <person name="Shiba T."/>
            <person name="Ishii K."/>
            <person name="Hattori M."/>
            <person name="Kuhara S."/>
            <person name="Nakazawa T."/>
        </authorList>
    </citation>
    <scope>NUCLEOTIDE SEQUENCE [LARGE SCALE GENOMIC DNA]</scope>
    <source>
        <strain>J138</strain>
    </source>
</reference>
<reference key="4">
    <citation type="submission" date="2002-05" db="EMBL/GenBank/DDBJ databases">
        <title>The genome sequence of Chlamydia pneumoniae TW183 and comparison with other Chlamydia strains based on whole genome sequence analysis.</title>
        <authorList>
            <person name="Geng M.M."/>
            <person name="Schuhmacher A."/>
            <person name="Muehldorfer I."/>
            <person name="Bensch K.W."/>
            <person name="Schaefer K.P."/>
            <person name="Schneider S."/>
            <person name="Pohl T."/>
            <person name="Essig A."/>
            <person name="Marre R."/>
            <person name="Melchers K."/>
        </authorList>
    </citation>
    <scope>NUCLEOTIDE SEQUENCE [LARGE SCALE GENOMIC DNA]</scope>
    <source>
        <strain>TW-183</strain>
    </source>
</reference>
<gene>
    <name evidence="1" type="primary">rpsE</name>
    <name type="synonym">rs5</name>
    <name type="ordered locus">CPn_0631</name>
    <name type="ordered locus">CP_0116</name>
    <name type="ordered locus">CpB0657</name>
</gene>
<sequence>MSLSKNSHKEDQLEEKVLVVNRCSKVVKGGRKFSFSALILVGDGKGRLGYGFAKANELTDAIRKGGEAAKKNLMKIEALEDGSIPHEVLVHHDGAQLLLKPAKPGTGIVAGSRIRLILEMAGIKDIVAKSFGSNNPMNQVKAAFKALTGLSPRKDLLRRGAAIND</sequence>
<protein>
    <recommendedName>
        <fullName evidence="1">Small ribosomal subunit protein uS5</fullName>
    </recommendedName>
    <alternativeName>
        <fullName evidence="2">30S ribosomal protein S5</fullName>
    </alternativeName>
</protein>
<comment type="function">
    <text evidence="1">With S4 and S12 plays an important role in translational accuracy.</text>
</comment>
<comment type="function">
    <text evidence="1">Located at the back of the 30S subunit body where it stabilizes the conformation of the head with respect to the body.</text>
</comment>
<comment type="subunit">
    <text evidence="1">Part of the 30S ribosomal subunit. Contacts proteins S4 and S8.</text>
</comment>
<comment type="domain">
    <text>The N-terminal domain interacts with the head of the 30S subunit; the C-terminal domain interacts with the body and contacts protein S4. The interaction surface between S4 and S5 is involved in control of translational fidelity.</text>
</comment>
<comment type="similarity">
    <text evidence="1">Belongs to the universal ribosomal protein uS5 family.</text>
</comment>
<accession>Q9Z7S3</accession>
<accession>Q9JQH1</accession>
<dbReference type="EMBL" id="AE001363">
    <property type="protein sequence ID" value="AAD18770.1"/>
    <property type="molecule type" value="Genomic_DNA"/>
</dbReference>
<dbReference type="EMBL" id="AE002161">
    <property type="protein sequence ID" value="AAF37999.1"/>
    <property type="molecule type" value="Genomic_DNA"/>
</dbReference>
<dbReference type="EMBL" id="BA000008">
    <property type="protein sequence ID" value="BAA98838.1"/>
    <property type="molecule type" value="Genomic_DNA"/>
</dbReference>
<dbReference type="EMBL" id="AE009440">
    <property type="protein sequence ID" value="AAP98586.1"/>
    <property type="molecule type" value="Genomic_DNA"/>
</dbReference>
<dbReference type="PIR" id="A72054">
    <property type="entry name" value="A72054"/>
</dbReference>
<dbReference type="PIR" id="D86569">
    <property type="entry name" value="D86569"/>
</dbReference>
<dbReference type="RefSeq" id="NP_224827.1">
    <property type="nucleotide sequence ID" value="NC_000922.1"/>
</dbReference>
<dbReference type="RefSeq" id="WP_010883269.1">
    <property type="nucleotide sequence ID" value="NZ_LN847257.1"/>
</dbReference>
<dbReference type="SMR" id="Q9Z7S3"/>
<dbReference type="STRING" id="406984.CPK_ORF00031"/>
<dbReference type="GeneID" id="45050681"/>
<dbReference type="KEGG" id="cpa:CP_0116"/>
<dbReference type="KEGG" id="cpj:rs5"/>
<dbReference type="KEGG" id="cpn:CPn_0631"/>
<dbReference type="KEGG" id="cpt:CpB0657"/>
<dbReference type="PATRIC" id="fig|115713.3.peg.701"/>
<dbReference type="eggNOG" id="COG0098">
    <property type="taxonomic scope" value="Bacteria"/>
</dbReference>
<dbReference type="HOGENOM" id="CLU_065898_2_2_0"/>
<dbReference type="OrthoDB" id="9809045at2"/>
<dbReference type="Proteomes" id="UP000000583">
    <property type="component" value="Chromosome"/>
</dbReference>
<dbReference type="Proteomes" id="UP000000801">
    <property type="component" value="Chromosome"/>
</dbReference>
<dbReference type="GO" id="GO:0015935">
    <property type="term" value="C:small ribosomal subunit"/>
    <property type="evidence" value="ECO:0007669"/>
    <property type="project" value="InterPro"/>
</dbReference>
<dbReference type="GO" id="GO:0019843">
    <property type="term" value="F:rRNA binding"/>
    <property type="evidence" value="ECO:0007669"/>
    <property type="project" value="UniProtKB-UniRule"/>
</dbReference>
<dbReference type="GO" id="GO:0003735">
    <property type="term" value="F:structural constituent of ribosome"/>
    <property type="evidence" value="ECO:0007669"/>
    <property type="project" value="InterPro"/>
</dbReference>
<dbReference type="GO" id="GO:0006412">
    <property type="term" value="P:translation"/>
    <property type="evidence" value="ECO:0007669"/>
    <property type="project" value="UniProtKB-UniRule"/>
</dbReference>
<dbReference type="FunFam" id="3.30.160.20:FF:000066">
    <property type="entry name" value="30S ribosomal protein S5"/>
    <property type="match status" value="1"/>
</dbReference>
<dbReference type="FunFam" id="3.30.230.10:FF:000002">
    <property type="entry name" value="30S ribosomal protein S5"/>
    <property type="match status" value="1"/>
</dbReference>
<dbReference type="Gene3D" id="3.30.160.20">
    <property type="match status" value="1"/>
</dbReference>
<dbReference type="Gene3D" id="3.30.230.10">
    <property type="match status" value="1"/>
</dbReference>
<dbReference type="HAMAP" id="MF_01307_B">
    <property type="entry name" value="Ribosomal_uS5_B"/>
    <property type="match status" value="1"/>
</dbReference>
<dbReference type="InterPro" id="IPR020568">
    <property type="entry name" value="Ribosomal_Su5_D2-typ_SF"/>
</dbReference>
<dbReference type="InterPro" id="IPR000851">
    <property type="entry name" value="Ribosomal_uS5"/>
</dbReference>
<dbReference type="InterPro" id="IPR005712">
    <property type="entry name" value="Ribosomal_uS5_bac-type"/>
</dbReference>
<dbReference type="InterPro" id="IPR005324">
    <property type="entry name" value="Ribosomal_uS5_C"/>
</dbReference>
<dbReference type="InterPro" id="IPR013810">
    <property type="entry name" value="Ribosomal_uS5_N"/>
</dbReference>
<dbReference type="InterPro" id="IPR018192">
    <property type="entry name" value="Ribosomal_uS5_N_CS"/>
</dbReference>
<dbReference type="InterPro" id="IPR014721">
    <property type="entry name" value="Ribsml_uS5_D2-typ_fold_subgr"/>
</dbReference>
<dbReference type="NCBIfam" id="TIGR01021">
    <property type="entry name" value="rpsE_bact"/>
    <property type="match status" value="1"/>
</dbReference>
<dbReference type="PANTHER" id="PTHR48277">
    <property type="entry name" value="MITOCHONDRIAL RIBOSOMAL PROTEIN S5"/>
    <property type="match status" value="1"/>
</dbReference>
<dbReference type="PANTHER" id="PTHR48277:SF1">
    <property type="entry name" value="MITOCHONDRIAL RIBOSOMAL PROTEIN S5"/>
    <property type="match status" value="1"/>
</dbReference>
<dbReference type="Pfam" id="PF00333">
    <property type="entry name" value="Ribosomal_S5"/>
    <property type="match status" value="1"/>
</dbReference>
<dbReference type="Pfam" id="PF03719">
    <property type="entry name" value="Ribosomal_S5_C"/>
    <property type="match status" value="1"/>
</dbReference>
<dbReference type="SUPFAM" id="SSF54768">
    <property type="entry name" value="dsRNA-binding domain-like"/>
    <property type="match status" value="1"/>
</dbReference>
<dbReference type="SUPFAM" id="SSF54211">
    <property type="entry name" value="Ribosomal protein S5 domain 2-like"/>
    <property type="match status" value="1"/>
</dbReference>
<dbReference type="PROSITE" id="PS00585">
    <property type="entry name" value="RIBOSOMAL_S5"/>
    <property type="match status" value="1"/>
</dbReference>
<dbReference type="PROSITE" id="PS50881">
    <property type="entry name" value="S5_DSRBD"/>
    <property type="match status" value="1"/>
</dbReference>
<organism>
    <name type="scientific">Chlamydia pneumoniae</name>
    <name type="common">Chlamydophila pneumoniae</name>
    <dbReference type="NCBI Taxonomy" id="83558"/>
    <lineage>
        <taxon>Bacteria</taxon>
        <taxon>Pseudomonadati</taxon>
        <taxon>Chlamydiota</taxon>
        <taxon>Chlamydiia</taxon>
        <taxon>Chlamydiales</taxon>
        <taxon>Chlamydiaceae</taxon>
        <taxon>Chlamydia/Chlamydophila group</taxon>
        <taxon>Chlamydia</taxon>
    </lineage>
</organism>
<feature type="chain" id="PRO_0000131498" description="Small ribosomal subunit protein uS5">
    <location>
        <begin position="1"/>
        <end position="165"/>
    </location>
</feature>
<feature type="domain" description="S5 DRBM" evidence="1">
    <location>
        <begin position="13"/>
        <end position="76"/>
    </location>
</feature>
<keyword id="KW-0687">Ribonucleoprotein</keyword>
<keyword id="KW-0689">Ribosomal protein</keyword>
<keyword id="KW-0694">RNA-binding</keyword>
<keyword id="KW-0699">rRNA-binding</keyword>
<name>RS5_CHLPN</name>
<proteinExistence type="inferred from homology"/>
<evidence type="ECO:0000255" key="1">
    <source>
        <dbReference type="HAMAP-Rule" id="MF_01307"/>
    </source>
</evidence>
<evidence type="ECO:0000305" key="2"/>